<accession>A8ZWE7</accession>
<gene>
    <name evidence="1" type="primary">rpsI</name>
    <name type="ordered locus">Dole_0945</name>
</gene>
<protein>
    <recommendedName>
        <fullName evidence="1">Small ribosomal subunit protein uS9</fullName>
    </recommendedName>
    <alternativeName>
        <fullName evidence="2">30S ribosomal protein S9</fullName>
    </alternativeName>
</protein>
<proteinExistence type="inferred from homology"/>
<evidence type="ECO:0000255" key="1">
    <source>
        <dbReference type="HAMAP-Rule" id="MF_00532"/>
    </source>
</evidence>
<evidence type="ECO:0000305" key="2"/>
<organism>
    <name type="scientific">Desulfosudis oleivorans (strain DSM 6200 / JCM 39069 / Hxd3)</name>
    <name type="common">Desulfococcus oleovorans</name>
    <dbReference type="NCBI Taxonomy" id="96561"/>
    <lineage>
        <taxon>Bacteria</taxon>
        <taxon>Pseudomonadati</taxon>
        <taxon>Thermodesulfobacteriota</taxon>
        <taxon>Desulfobacteria</taxon>
        <taxon>Desulfobacterales</taxon>
        <taxon>Desulfosudaceae</taxon>
        <taxon>Desulfosudis</taxon>
    </lineage>
</organism>
<comment type="similarity">
    <text evidence="1">Belongs to the universal ribosomal protein uS9 family.</text>
</comment>
<reference key="1">
    <citation type="submission" date="2007-10" db="EMBL/GenBank/DDBJ databases">
        <title>Complete sequence of Desulfococcus oleovorans Hxd3.</title>
        <authorList>
            <consortium name="US DOE Joint Genome Institute"/>
            <person name="Copeland A."/>
            <person name="Lucas S."/>
            <person name="Lapidus A."/>
            <person name="Barry K."/>
            <person name="Glavina del Rio T."/>
            <person name="Dalin E."/>
            <person name="Tice H."/>
            <person name="Pitluck S."/>
            <person name="Kiss H."/>
            <person name="Brettin T."/>
            <person name="Bruce D."/>
            <person name="Detter J.C."/>
            <person name="Han C."/>
            <person name="Schmutz J."/>
            <person name="Larimer F."/>
            <person name="Land M."/>
            <person name="Hauser L."/>
            <person name="Kyrpides N."/>
            <person name="Kim E."/>
            <person name="Wawrik B."/>
            <person name="Richardson P."/>
        </authorList>
    </citation>
    <scope>NUCLEOTIDE SEQUENCE [LARGE SCALE GENOMIC DNA]</scope>
    <source>
        <strain>DSM 6200 / JCM 39069 / Hxd3</strain>
    </source>
</reference>
<name>RS9_DESOH</name>
<sequence>MEAQTLYATGKRKTAIARTWMKPGSGKITVNGKDADAHFTTNAARIIMRESLKITETLESYDVDIRVIGGGITGQAGAARHGISKILAGLDPEMRQKLKANGFLTRDARVKERKKYGQRGARARYQFSKR</sequence>
<keyword id="KW-1185">Reference proteome</keyword>
<keyword id="KW-0687">Ribonucleoprotein</keyword>
<keyword id="KW-0689">Ribosomal protein</keyword>
<dbReference type="EMBL" id="CP000859">
    <property type="protein sequence ID" value="ABW66755.1"/>
    <property type="molecule type" value="Genomic_DNA"/>
</dbReference>
<dbReference type="RefSeq" id="WP_012174373.1">
    <property type="nucleotide sequence ID" value="NC_009943.1"/>
</dbReference>
<dbReference type="SMR" id="A8ZWE7"/>
<dbReference type="STRING" id="96561.Dole_0945"/>
<dbReference type="KEGG" id="dol:Dole_0945"/>
<dbReference type="eggNOG" id="COG0103">
    <property type="taxonomic scope" value="Bacteria"/>
</dbReference>
<dbReference type="HOGENOM" id="CLU_046483_2_1_7"/>
<dbReference type="OrthoDB" id="9803965at2"/>
<dbReference type="Proteomes" id="UP000008561">
    <property type="component" value="Chromosome"/>
</dbReference>
<dbReference type="GO" id="GO:0022627">
    <property type="term" value="C:cytosolic small ribosomal subunit"/>
    <property type="evidence" value="ECO:0007669"/>
    <property type="project" value="TreeGrafter"/>
</dbReference>
<dbReference type="GO" id="GO:0003723">
    <property type="term" value="F:RNA binding"/>
    <property type="evidence" value="ECO:0007669"/>
    <property type="project" value="TreeGrafter"/>
</dbReference>
<dbReference type="GO" id="GO:0003735">
    <property type="term" value="F:structural constituent of ribosome"/>
    <property type="evidence" value="ECO:0007669"/>
    <property type="project" value="InterPro"/>
</dbReference>
<dbReference type="GO" id="GO:0006412">
    <property type="term" value="P:translation"/>
    <property type="evidence" value="ECO:0007669"/>
    <property type="project" value="UniProtKB-UniRule"/>
</dbReference>
<dbReference type="FunFam" id="3.30.230.10:FF:000001">
    <property type="entry name" value="30S ribosomal protein S9"/>
    <property type="match status" value="1"/>
</dbReference>
<dbReference type="Gene3D" id="3.30.230.10">
    <property type="match status" value="1"/>
</dbReference>
<dbReference type="HAMAP" id="MF_00532_B">
    <property type="entry name" value="Ribosomal_uS9_B"/>
    <property type="match status" value="1"/>
</dbReference>
<dbReference type="InterPro" id="IPR020568">
    <property type="entry name" value="Ribosomal_Su5_D2-typ_SF"/>
</dbReference>
<dbReference type="InterPro" id="IPR000754">
    <property type="entry name" value="Ribosomal_uS9"/>
</dbReference>
<dbReference type="InterPro" id="IPR023035">
    <property type="entry name" value="Ribosomal_uS9_bac/plastid"/>
</dbReference>
<dbReference type="InterPro" id="IPR014721">
    <property type="entry name" value="Ribsml_uS5_D2-typ_fold_subgr"/>
</dbReference>
<dbReference type="NCBIfam" id="NF001099">
    <property type="entry name" value="PRK00132.1"/>
    <property type="match status" value="1"/>
</dbReference>
<dbReference type="PANTHER" id="PTHR21569">
    <property type="entry name" value="RIBOSOMAL PROTEIN S9"/>
    <property type="match status" value="1"/>
</dbReference>
<dbReference type="PANTHER" id="PTHR21569:SF1">
    <property type="entry name" value="SMALL RIBOSOMAL SUBUNIT PROTEIN US9M"/>
    <property type="match status" value="1"/>
</dbReference>
<dbReference type="Pfam" id="PF00380">
    <property type="entry name" value="Ribosomal_S9"/>
    <property type="match status" value="1"/>
</dbReference>
<dbReference type="SUPFAM" id="SSF54211">
    <property type="entry name" value="Ribosomal protein S5 domain 2-like"/>
    <property type="match status" value="1"/>
</dbReference>
<feature type="chain" id="PRO_1000146451" description="Small ribosomal subunit protein uS9">
    <location>
        <begin position="1"/>
        <end position="130"/>
    </location>
</feature>